<name>YLDA_ECOLI</name>
<organism>
    <name type="scientific">Escherichia coli (strain K12)</name>
    <dbReference type="NCBI Taxonomy" id="83333"/>
    <lineage>
        <taxon>Bacteria</taxon>
        <taxon>Pseudomonadati</taxon>
        <taxon>Pseudomonadota</taxon>
        <taxon>Gammaproteobacteria</taxon>
        <taxon>Enterobacterales</taxon>
        <taxon>Enterobacteriaceae</taxon>
        <taxon>Escherichia</taxon>
    </lineage>
</organism>
<accession>P0DPN4</accession>
<accession>A0A385XJC9</accession>
<keyword id="KW-0997">Cell inner membrane</keyword>
<keyword id="KW-1003">Cell membrane</keyword>
<keyword id="KW-0472">Membrane</keyword>
<keyword id="KW-1185">Reference proteome</keyword>
<keyword id="KW-0812">Transmembrane</keyword>
<keyword id="KW-1133">Transmembrane helix</keyword>
<comment type="subcellular location">
    <subcellularLocation>
        <location evidence="4">Cell inner membrane</location>
        <topology evidence="1">Single-pass membrane protein</topology>
    </subcellularLocation>
</comment>
<comment type="induction">
    <text evidence="2">Expressed during stationary phase (at protein level).</text>
</comment>
<dbReference type="EMBL" id="U00096">
    <property type="protein sequence ID" value="AYC08185.1"/>
    <property type="molecule type" value="Genomic_DNA"/>
</dbReference>
<dbReference type="EnsemblBacteria" id="AYC08185">
    <property type="protein sequence ID" value="AYC08185"/>
    <property type="gene ID" value="b4734"/>
</dbReference>
<dbReference type="InParanoid" id="P0DPN4"/>
<dbReference type="BioCyc" id="EcoCyc:MONOMER0-4411"/>
<dbReference type="PRO" id="PR:P0DPN4"/>
<dbReference type="Proteomes" id="UP000000625">
    <property type="component" value="Chromosome"/>
</dbReference>
<dbReference type="GO" id="GO:0005886">
    <property type="term" value="C:plasma membrane"/>
    <property type="evidence" value="ECO:0007669"/>
    <property type="project" value="UniProtKB-SubCell"/>
</dbReference>
<dbReference type="InterPro" id="IPR048192">
    <property type="entry name" value="YldA-like"/>
</dbReference>
<dbReference type="NCBIfam" id="NF041476">
    <property type="entry name" value="membrane_YldA"/>
    <property type="match status" value="1"/>
</dbReference>
<dbReference type="Pfam" id="PF23689">
    <property type="entry name" value="YldA"/>
    <property type="match status" value="1"/>
</dbReference>
<protein>
    <recommendedName>
        <fullName evidence="3">Protein YldA</fullName>
    </recommendedName>
</protein>
<reference key="1">
    <citation type="journal article" date="1997" name="Science">
        <title>The complete genome sequence of Escherichia coli K-12.</title>
        <authorList>
            <person name="Blattner F.R."/>
            <person name="Plunkett G. III"/>
            <person name="Bloch C.A."/>
            <person name="Perna N.T."/>
            <person name="Burland V."/>
            <person name="Riley M."/>
            <person name="Collado-Vides J."/>
            <person name="Glasner J.D."/>
            <person name="Rode C.K."/>
            <person name="Mayhew G.F."/>
            <person name="Gregor J."/>
            <person name="Davis N.W."/>
            <person name="Kirkpatrick H.A."/>
            <person name="Goeden M.A."/>
            <person name="Rose D.J."/>
            <person name="Mau B."/>
            <person name="Shao Y."/>
        </authorList>
    </citation>
    <scope>NUCLEOTIDE SEQUENCE [LARGE SCALE GENOMIC DNA]</scope>
    <source>
        <strain>K12 / MG1655 / ATCC 47076</strain>
    </source>
</reference>
<reference key="2">
    <citation type="journal article" date="2018" name="Proteomics">
        <title>Identifying new small proteins in Escherichia coli.</title>
        <authorList>
            <person name="VanOrsdel C.E."/>
            <person name="Kelly J.P."/>
            <person name="Burke B.N."/>
            <person name="Lein C.D."/>
            <person name="Oufiero C.E."/>
            <person name="Sanchez J.F."/>
            <person name="Wimmers L.E."/>
            <person name="Hearn D.J."/>
            <person name="Abuikhdair F.J."/>
            <person name="Barnhart K.R."/>
            <person name="Duley M.L."/>
            <person name="Ernst S.E.G."/>
            <person name="Kenerson B.A."/>
            <person name="Serafin A.J."/>
            <person name="Hemm M.R."/>
        </authorList>
    </citation>
    <scope>IDENTIFICATION</scope>
    <scope>INDUCTION</scope>
</reference>
<evidence type="ECO:0000255" key="1"/>
<evidence type="ECO:0000269" key="2">
    <source>
    </source>
</evidence>
<evidence type="ECO:0000303" key="3">
    <source>
    </source>
</evidence>
<evidence type="ECO:0000305" key="4"/>
<feature type="chain" id="PRO_0000445162" description="Protein YldA">
    <location>
        <begin position="1"/>
        <end position="29"/>
    </location>
</feature>
<feature type="transmembrane region" description="Helical" evidence="1">
    <location>
        <begin position="5"/>
        <end position="25"/>
    </location>
</feature>
<proteinExistence type="evidence at protein level"/>
<gene>
    <name evidence="3" type="primary">yldA</name>
    <name type="ordered locus">b4734</name>
</gene>
<sequence length="29" mass="3258">MAEAFYILIGFLIMAAIIVMAVLYLENHS</sequence>